<protein>
    <recommendedName>
        <fullName evidence="1">Isoprenyl transferase</fullName>
        <ecNumber evidence="1">2.5.1.-</ecNumber>
    </recommendedName>
</protein>
<proteinExistence type="inferred from homology"/>
<accession>Q720A7</accession>
<comment type="function">
    <text evidence="1">Catalyzes the condensation of isopentenyl diphosphate (IPP) with allylic pyrophosphates generating different type of terpenoids.</text>
</comment>
<comment type="cofactor">
    <cofactor evidence="1">
        <name>Mg(2+)</name>
        <dbReference type="ChEBI" id="CHEBI:18420"/>
    </cofactor>
    <text evidence="1">Binds 2 magnesium ions per subunit.</text>
</comment>
<comment type="subunit">
    <text evidence="1">Homodimer.</text>
</comment>
<comment type="similarity">
    <text evidence="1">Belongs to the UPP synthase family.</text>
</comment>
<reference key="1">
    <citation type="journal article" date="2004" name="Nucleic Acids Res.">
        <title>Whole genome comparisons of serotype 4b and 1/2a strains of the food-borne pathogen Listeria monocytogenes reveal new insights into the core genome components of this species.</title>
        <authorList>
            <person name="Nelson K.E."/>
            <person name="Fouts D.E."/>
            <person name="Mongodin E.F."/>
            <person name="Ravel J."/>
            <person name="DeBoy R.T."/>
            <person name="Kolonay J.F."/>
            <person name="Rasko D.A."/>
            <person name="Angiuoli S.V."/>
            <person name="Gill S.R."/>
            <person name="Paulsen I.T."/>
            <person name="Peterson J.D."/>
            <person name="White O."/>
            <person name="Nelson W.C."/>
            <person name="Nierman W.C."/>
            <person name="Beanan M.J."/>
            <person name="Brinkac L.M."/>
            <person name="Daugherty S.C."/>
            <person name="Dodson R.J."/>
            <person name="Durkin A.S."/>
            <person name="Madupu R."/>
            <person name="Haft D.H."/>
            <person name="Selengut J."/>
            <person name="Van Aken S.E."/>
            <person name="Khouri H.M."/>
            <person name="Fedorova N."/>
            <person name="Forberger H.A."/>
            <person name="Tran B."/>
            <person name="Kathariou S."/>
            <person name="Wonderling L.D."/>
            <person name="Uhlich G.A."/>
            <person name="Bayles D.O."/>
            <person name="Luchansky J.B."/>
            <person name="Fraser C.M."/>
        </authorList>
    </citation>
    <scope>NUCLEOTIDE SEQUENCE [LARGE SCALE GENOMIC DNA]</scope>
    <source>
        <strain>F2365</strain>
    </source>
</reference>
<evidence type="ECO:0000255" key="1">
    <source>
        <dbReference type="HAMAP-Rule" id="MF_01139"/>
    </source>
</evidence>
<keyword id="KW-0460">Magnesium</keyword>
<keyword id="KW-0479">Metal-binding</keyword>
<keyword id="KW-0808">Transferase</keyword>
<gene>
    <name evidence="1" type="primary">uppS</name>
    <name type="ordered locus">LMOf2365_1332</name>
</gene>
<feature type="chain" id="PRO_0000123635" description="Isoprenyl transferase">
    <location>
        <begin position="1"/>
        <end position="252"/>
    </location>
</feature>
<feature type="active site" evidence="1">
    <location>
        <position position="32"/>
    </location>
</feature>
<feature type="active site" description="Proton acceptor" evidence="1">
    <location>
        <position position="80"/>
    </location>
</feature>
<feature type="binding site" evidence="1">
    <location>
        <position position="32"/>
    </location>
    <ligand>
        <name>Mg(2+)</name>
        <dbReference type="ChEBI" id="CHEBI:18420"/>
    </ligand>
</feature>
<feature type="binding site" evidence="1">
    <location>
        <begin position="33"/>
        <end position="36"/>
    </location>
    <ligand>
        <name>substrate</name>
    </ligand>
</feature>
<feature type="binding site" evidence="1">
    <location>
        <position position="37"/>
    </location>
    <ligand>
        <name>substrate</name>
    </ligand>
</feature>
<feature type="binding site" evidence="1">
    <location>
        <position position="45"/>
    </location>
    <ligand>
        <name>substrate</name>
    </ligand>
</feature>
<feature type="binding site" evidence="1">
    <location>
        <position position="49"/>
    </location>
    <ligand>
        <name>substrate</name>
    </ligand>
</feature>
<feature type="binding site" evidence="1">
    <location>
        <begin position="77"/>
        <end position="79"/>
    </location>
    <ligand>
        <name>substrate</name>
    </ligand>
</feature>
<feature type="binding site" evidence="1">
    <location>
        <position position="81"/>
    </location>
    <ligand>
        <name>substrate</name>
    </ligand>
</feature>
<feature type="binding site" evidence="1">
    <location>
        <position position="83"/>
    </location>
    <ligand>
        <name>substrate</name>
    </ligand>
</feature>
<feature type="binding site" evidence="1">
    <location>
        <position position="200"/>
    </location>
    <ligand>
        <name>substrate</name>
    </ligand>
</feature>
<feature type="binding site" evidence="1">
    <location>
        <begin position="206"/>
        <end position="208"/>
    </location>
    <ligand>
        <name>substrate</name>
    </ligand>
</feature>
<feature type="binding site" evidence="1">
    <location>
        <position position="219"/>
    </location>
    <ligand>
        <name>Mg(2+)</name>
        <dbReference type="ChEBI" id="CHEBI:18420"/>
    </ligand>
</feature>
<organism>
    <name type="scientific">Listeria monocytogenes serotype 4b (strain F2365)</name>
    <dbReference type="NCBI Taxonomy" id="265669"/>
    <lineage>
        <taxon>Bacteria</taxon>
        <taxon>Bacillati</taxon>
        <taxon>Bacillota</taxon>
        <taxon>Bacilli</taxon>
        <taxon>Bacillales</taxon>
        <taxon>Listeriaceae</taxon>
        <taxon>Listeria</taxon>
    </lineage>
</organism>
<name>ISPT_LISMF</name>
<dbReference type="EC" id="2.5.1.-" evidence="1"/>
<dbReference type="EMBL" id="AE017262">
    <property type="protein sequence ID" value="AAT04107.1"/>
    <property type="molecule type" value="Genomic_DNA"/>
</dbReference>
<dbReference type="RefSeq" id="WP_003727497.1">
    <property type="nucleotide sequence ID" value="NC_002973.6"/>
</dbReference>
<dbReference type="SMR" id="Q720A7"/>
<dbReference type="KEGG" id="lmf:LMOf2365_1332"/>
<dbReference type="HOGENOM" id="CLU_038505_1_1_9"/>
<dbReference type="GO" id="GO:0005829">
    <property type="term" value="C:cytosol"/>
    <property type="evidence" value="ECO:0007669"/>
    <property type="project" value="TreeGrafter"/>
</dbReference>
<dbReference type="GO" id="GO:0008834">
    <property type="term" value="F:ditrans,polycis-undecaprenyl-diphosphate synthase [(2E,6E)-farnesyl-diphosphate specific] activity"/>
    <property type="evidence" value="ECO:0007669"/>
    <property type="project" value="TreeGrafter"/>
</dbReference>
<dbReference type="GO" id="GO:0000287">
    <property type="term" value="F:magnesium ion binding"/>
    <property type="evidence" value="ECO:0007669"/>
    <property type="project" value="UniProtKB-UniRule"/>
</dbReference>
<dbReference type="GO" id="GO:0030145">
    <property type="term" value="F:manganese ion binding"/>
    <property type="evidence" value="ECO:0007669"/>
    <property type="project" value="TreeGrafter"/>
</dbReference>
<dbReference type="GO" id="GO:0016094">
    <property type="term" value="P:polyprenol biosynthetic process"/>
    <property type="evidence" value="ECO:0007669"/>
    <property type="project" value="TreeGrafter"/>
</dbReference>
<dbReference type="CDD" id="cd00475">
    <property type="entry name" value="Cis_IPPS"/>
    <property type="match status" value="1"/>
</dbReference>
<dbReference type="FunFam" id="3.40.1180.10:FF:000001">
    <property type="entry name" value="(2E,6E)-farnesyl-diphosphate-specific ditrans,polycis-undecaprenyl-diphosphate synthase"/>
    <property type="match status" value="1"/>
</dbReference>
<dbReference type="Gene3D" id="3.40.1180.10">
    <property type="entry name" value="Decaprenyl diphosphate synthase-like"/>
    <property type="match status" value="1"/>
</dbReference>
<dbReference type="HAMAP" id="MF_01139">
    <property type="entry name" value="ISPT"/>
    <property type="match status" value="1"/>
</dbReference>
<dbReference type="InterPro" id="IPR001441">
    <property type="entry name" value="UPP_synth-like"/>
</dbReference>
<dbReference type="InterPro" id="IPR018520">
    <property type="entry name" value="UPP_synth-like_CS"/>
</dbReference>
<dbReference type="InterPro" id="IPR036424">
    <property type="entry name" value="UPP_synth-like_sf"/>
</dbReference>
<dbReference type="NCBIfam" id="NF011405">
    <property type="entry name" value="PRK14830.1"/>
    <property type="match status" value="1"/>
</dbReference>
<dbReference type="NCBIfam" id="TIGR00055">
    <property type="entry name" value="uppS"/>
    <property type="match status" value="1"/>
</dbReference>
<dbReference type="PANTHER" id="PTHR10291:SF0">
    <property type="entry name" value="DEHYDRODOLICHYL DIPHOSPHATE SYNTHASE 2"/>
    <property type="match status" value="1"/>
</dbReference>
<dbReference type="PANTHER" id="PTHR10291">
    <property type="entry name" value="DEHYDRODOLICHYL DIPHOSPHATE SYNTHASE FAMILY MEMBER"/>
    <property type="match status" value="1"/>
</dbReference>
<dbReference type="Pfam" id="PF01255">
    <property type="entry name" value="Prenyltransf"/>
    <property type="match status" value="1"/>
</dbReference>
<dbReference type="SUPFAM" id="SSF64005">
    <property type="entry name" value="Undecaprenyl diphosphate synthase"/>
    <property type="match status" value="1"/>
</dbReference>
<dbReference type="PROSITE" id="PS01066">
    <property type="entry name" value="UPP_SYNTHASE"/>
    <property type="match status" value="1"/>
</dbReference>
<sequence>MFKKLFRQDENILNSELAEDLPIPRHVAIIMDGNGRWAKKRFLPRIAGHKEGMDVVKRVTRYANAIGIDVLTLYAFSTENWKRPTDEVDFLMKLPVEFFDSFVPELIEENVRVNVMGYRENLPNHTMRAVEKAIADTAHCTGLTLNFALNYGGRSEIITAAKEAMKELELEGKSADDLTEEKLNDHLMSSGLGDPDLLIRTSGELRLSNFMLWQLAYSEFYFTDTHWPDFSKEDFLQAIIEYQNRSRRFGGL</sequence>